<dbReference type="EC" id="1.14.14.-" evidence="2"/>
<dbReference type="EMBL" id="DQ282163">
    <property type="protein sequence ID" value="ABB77910.1"/>
    <property type="molecule type" value="Genomic_DNA"/>
</dbReference>
<dbReference type="SMR" id="Q2XNC9"/>
<dbReference type="STRING" id="9597.ENSPPAP00000027583"/>
<dbReference type="eggNOG" id="KOG0156">
    <property type="taxonomic scope" value="Eukaryota"/>
</dbReference>
<dbReference type="UniPathway" id="UPA00199"/>
<dbReference type="UniPathway" id="UPA00296"/>
<dbReference type="UniPathway" id="UPA00912"/>
<dbReference type="Proteomes" id="UP000240080">
    <property type="component" value="Unplaced"/>
</dbReference>
<dbReference type="GO" id="GO:0005789">
    <property type="term" value="C:endoplasmic reticulum membrane"/>
    <property type="evidence" value="ECO:0007669"/>
    <property type="project" value="UniProtKB-SubCell"/>
</dbReference>
<dbReference type="GO" id="GO:0062188">
    <property type="term" value="F:anandamide 11,12 epoxidase activity"/>
    <property type="evidence" value="ECO:0007669"/>
    <property type="project" value="RHEA"/>
</dbReference>
<dbReference type="GO" id="GO:0062189">
    <property type="term" value="F:anandamide 14,15 epoxidase activity"/>
    <property type="evidence" value="ECO:0007669"/>
    <property type="project" value="RHEA"/>
</dbReference>
<dbReference type="GO" id="GO:0062187">
    <property type="term" value="F:anandamide 8,9 epoxidase activity"/>
    <property type="evidence" value="ECO:0007669"/>
    <property type="project" value="RHEA"/>
</dbReference>
<dbReference type="GO" id="GO:0020037">
    <property type="term" value="F:heme binding"/>
    <property type="evidence" value="ECO:0000250"/>
    <property type="project" value="UniProtKB"/>
</dbReference>
<dbReference type="GO" id="GO:0005506">
    <property type="term" value="F:iron ion binding"/>
    <property type="evidence" value="ECO:0007669"/>
    <property type="project" value="InterPro"/>
</dbReference>
<dbReference type="GO" id="GO:0016712">
    <property type="term" value="F:oxidoreductase activity, acting on paired donors, with incorporation or reduction of molecular oxygen, reduced flavin or flavoprotein as one donor, and incorporation of one atom of oxygen"/>
    <property type="evidence" value="ECO:0007669"/>
    <property type="project" value="InterPro"/>
</dbReference>
<dbReference type="GO" id="GO:0019369">
    <property type="term" value="P:arachidonate metabolic process"/>
    <property type="evidence" value="ECO:0007669"/>
    <property type="project" value="TreeGrafter"/>
</dbReference>
<dbReference type="GO" id="GO:0008203">
    <property type="term" value="P:cholesterol metabolic process"/>
    <property type="evidence" value="ECO:0007669"/>
    <property type="project" value="UniProtKB-UniPathway"/>
</dbReference>
<dbReference type="GO" id="GO:0042572">
    <property type="term" value="P:retinol metabolic process"/>
    <property type="evidence" value="ECO:0007669"/>
    <property type="project" value="UniProtKB-UniPathway"/>
</dbReference>
<dbReference type="GO" id="GO:0006805">
    <property type="term" value="P:xenobiotic metabolic process"/>
    <property type="evidence" value="ECO:0007669"/>
    <property type="project" value="TreeGrafter"/>
</dbReference>
<dbReference type="CDD" id="cd20663">
    <property type="entry name" value="CYP2D"/>
    <property type="match status" value="1"/>
</dbReference>
<dbReference type="FunFam" id="1.10.630.10:FF:000004">
    <property type="entry name" value="cytochrome P450 2D15 isoform X1"/>
    <property type="match status" value="1"/>
</dbReference>
<dbReference type="Gene3D" id="1.10.630.10">
    <property type="entry name" value="Cytochrome P450"/>
    <property type="match status" value="1"/>
</dbReference>
<dbReference type="InterPro" id="IPR001128">
    <property type="entry name" value="Cyt_P450"/>
</dbReference>
<dbReference type="InterPro" id="IPR017972">
    <property type="entry name" value="Cyt_P450_CS"/>
</dbReference>
<dbReference type="InterPro" id="IPR002401">
    <property type="entry name" value="Cyt_P450_E_grp-I"/>
</dbReference>
<dbReference type="InterPro" id="IPR008069">
    <property type="entry name" value="Cyt_P450_E_grp-I_CYP2D-like"/>
</dbReference>
<dbReference type="InterPro" id="IPR036396">
    <property type="entry name" value="Cyt_P450_sf"/>
</dbReference>
<dbReference type="InterPro" id="IPR050182">
    <property type="entry name" value="Cytochrome_P450_fam2"/>
</dbReference>
<dbReference type="PANTHER" id="PTHR24300:SF1">
    <property type="entry name" value="CYTOCHROME P450 2D6-RELATED"/>
    <property type="match status" value="1"/>
</dbReference>
<dbReference type="PANTHER" id="PTHR24300">
    <property type="entry name" value="CYTOCHROME P450 508A4-RELATED"/>
    <property type="match status" value="1"/>
</dbReference>
<dbReference type="Pfam" id="PF00067">
    <property type="entry name" value="p450"/>
    <property type="match status" value="1"/>
</dbReference>
<dbReference type="PRINTS" id="PR00463">
    <property type="entry name" value="EP450I"/>
</dbReference>
<dbReference type="PRINTS" id="PR01686">
    <property type="entry name" value="EP450ICYP2D"/>
</dbReference>
<dbReference type="PRINTS" id="PR00385">
    <property type="entry name" value="P450"/>
</dbReference>
<dbReference type="SUPFAM" id="SSF48264">
    <property type="entry name" value="Cytochrome P450"/>
    <property type="match status" value="1"/>
</dbReference>
<dbReference type="PROSITE" id="PS00086">
    <property type="entry name" value="CYTOCHROME_P450"/>
    <property type="match status" value="1"/>
</dbReference>
<evidence type="ECO:0000250" key="1"/>
<evidence type="ECO:0000250" key="2">
    <source>
        <dbReference type="UniProtKB" id="P10635"/>
    </source>
</evidence>
<evidence type="ECO:0000305" key="3"/>
<proteinExistence type="inferred from homology"/>
<reference key="1">
    <citation type="submission" date="2005-11" db="EMBL/GenBank/DDBJ databases">
        <title>CYP2D6 evolution and allele diversity among human races.</title>
        <authorList>
            <person name="Koch W.H."/>
            <person name="Nikoloff D.M."/>
            <person name="Lu W."/>
            <person name="Pan R.M."/>
            <person name="deLeon J."/>
            <person name="Wedlund P.J."/>
        </authorList>
    </citation>
    <scope>NUCLEOTIDE SEQUENCE [GENOMIC DNA]</scope>
</reference>
<gene>
    <name type="primary">CYP2D6</name>
</gene>
<organism>
    <name type="scientific">Pan paniscus</name>
    <name type="common">Pygmy chimpanzee</name>
    <name type="synonym">Bonobo</name>
    <dbReference type="NCBI Taxonomy" id="9597"/>
    <lineage>
        <taxon>Eukaryota</taxon>
        <taxon>Metazoa</taxon>
        <taxon>Chordata</taxon>
        <taxon>Craniata</taxon>
        <taxon>Vertebrata</taxon>
        <taxon>Euteleostomi</taxon>
        <taxon>Mammalia</taxon>
        <taxon>Eutheria</taxon>
        <taxon>Euarchontoglires</taxon>
        <taxon>Primates</taxon>
        <taxon>Haplorrhini</taxon>
        <taxon>Catarrhini</taxon>
        <taxon>Hominidae</taxon>
        <taxon>Pan</taxon>
    </lineage>
</organism>
<keyword id="KW-0153">Cholesterol metabolism</keyword>
<keyword id="KW-0256">Endoplasmic reticulum</keyword>
<keyword id="KW-0276">Fatty acid metabolism</keyword>
<keyword id="KW-0349">Heme</keyword>
<keyword id="KW-0408">Iron</keyword>
<keyword id="KW-0443">Lipid metabolism</keyword>
<keyword id="KW-0472">Membrane</keyword>
<keyword id="KW-0479">Metal-binding</keyword>
<keyword id="KW-0492">Microsome</keyword>
<keyword id="KW-0503">Monooxygenase</keyword>
<keyword id="KW-0560">Oxidoreductase</keyword>
<keyword id="KW-1185">Reference proteome</keyword>
<keyword id="KW-0753">Steroid metabolism</keyword>
<keyword id="KW-1207">Sterol metabolism</keyword>
<comment type="function">
    <text evidence="2">A cytochrome P450 monooxygenase involved in the metabolism of fatty acids, steroids and retinoids. Mechanistically, uses molecular oxygen inserting one oxygen atom into a substrate, and reducing the second into a water molecule, with two electrons provided by NADPH via cytochrome P450 reductase (NADPH--hemoprotein reductase). Catalyzes the epoxidation of double bonds of polyunsaturated fatty acids (PUFA). Metabolizes endocannabinoid arachidonoylethanolamide (anandamide) to 20-hydroxyeicosatetraenoic acid ethanolamide (20-HETE-EA) and 8,9-, 11,12-, and 14,15-epoxyeicosatrienoic acid ethanolamides (EpETrE-EAs), potentially modulating endocannabinoid system signaling. Catalyzes the hydroxylation of carbon-hydrogen bonds. Metabolizes cholesterol toward 25-hydroxycholesterol, a physiological regulator of cellular cholesterol homeostasis. Catalyzes the oxidative transformations of all-trans retinol to all-trans retinal, a precursor for the active form all-trans-retinoic acid. Also involved in the oxidative metabolism of drugs such as antiarrhythmics, adrenoceptor antagonists, and tricyclic antidepressants.</text>
</comment>
<comment type="catalytic activity">
    <reaction evidence="2">
        <text>(5Z,8Z,11Z,14Z)-eicosatetraenoate + reduced [NADPH--hemoprotein reductase] + O2 = (8R,9S)-epoxy-(5Z,11Z,14Z)-eicosatrienoate + oxidized [NADPH--hemoprotein reductase] + H2O + H(+)</text>
        <dbReference type="Rhea" id="RHEA:49884"/>
        <dbReference type="Rhea" id="RHEA-COMP:11964"/>
        <dbReference type="Rhea" id="RHEA-COMP:11965"/>
        <dbReference type="ChEBI" id="CHEBI:15377"/>
        <dbReference type="ChEBI" id="CHEBI:15378"/>
        <dbReference type="ChEBI" id="CHEBI:15379"/>
        <dbReference type="ChEBI" id="CHEBI:32395"/>
        <dbReference type="ChEBI" id="CHEBI:57618"/>
        <dbReference type="ChEBI" id="CHEBI:58210"/>
        <dbReference type="ChEBI" id="CHEBI:131975"/>
    </reaction>
    <physiologicalReaction direction="left-to-right" evidence="2">
        <dbReference type="Rhea" id="RHEA:49885"/>
    </physiologicalReaction>
</comment>
<comment type="catalytic activity">
    <reaction evidence="2">
        <text>(5Z,8Z,11Z,14Z)-eicosatetraenoate + reduced [NADPH--hemoprotein reductase] + O2 = (11R,12S)-epoxy-(5Z,8Z,14Z)-eicosatrienoate + oxidized [NADPH--hemoprotein reductase] + H2O + H(+)</text>
        <dbReference type="Rhea" id="RHEA:49880"/>
        <dbReference type="Rhea" id="RHEA-COMP:11964"/>
        <dbReference type="Rhea" id="RHEA-COMP:11965"/>
        <dbReference type="ChEBI" id="CHEBI:15377"/>
        <dbReference type="ChEBI" id="CHEBI:15378"/>
        <dbReference type="ChEBI" id="CHEBI:15379"/>
        <dbReference type="ChEBI" id="CHEBI:32395"/>
        <dbReference type="ChEBI" id="CHEBI:57618"/>
        <dbReference type="ChEBI" id="CHEBI:58210"/>
        <dbReference type="ChEBI" id="CHEBI:131970"/>
    </reaction>
    <physiologicalReaction direction="left-to-right" evidence="2">
        <dbReference type="Rhea" id="RHEA:49881"/>
    </physiologicalReaction>
</comment>
<comment type="catalytic activity">
    <reaction evidence="2">
        <text>(5Z,8Z,11Z,14Z)-eicosatetraenoate + reduced [NADPH--hemoprotein reductase] + O2 = (14S,15R)-epoxy-(5Z,8Z,11Z)-eicosatrienoate + oxidized [NADPH--hemoprotein reductase] + H2O + H(+)</text>
        <dbReference type="Rhea" id="RHEA:49856"/>
        <dbReference type="Rhea" id="RHEA-COMP:11964"/>
        <dbReference type="Rhea" id="RHEA-COMP:11965"/>
        <dbReference type="ChEBI" id="CHEBI:15377"/>
        <dbReference type="ChEBI" id="CHEBI:15378"/>
        <dbReference type="ChEBI" id="CHEBI:15379"/>
        <dbReference type="ChEBI" id="CHEBI:32395"/>
        <dbReference type="ChEBI" id="CHEBI:57618"/>
        <dbReference type="ChEBI" id="CHEBI:58210"/>
        <dbReference type="ChEBI" id="CHEBI:131964"/>
    </reaction>
    <physiologicalReaction direction="left-to-right" evidence="2">
        <dbReference type="Rhea" id="RHEA:49857"/>
    </physiologicalReaction>
</comment>
<comment type="catalytic activity">
    <reaction evidence="2">
        <text>N-(5Z,8Z,11Z,14Z-eicosatetraenoyl)-ethanolamine + reduced [NADPH--hemoprotein reductase] + O2 = N-(8,9-epoxy-5Z,11Z,14Z-eicosatrienoyl)-ethanolamine + oxidized [NADPH--hemoprotein reductase] + H2O + H(+)</text>
        <dbReference type="Rhea" id="RHEA:53140"/>
        <dbReference type="Rhea" id="RHEA-COMP:11964"/>
        <dbReference type="Rhea" id="RHEA-COMP:11965"/>
        <dbReference type="ChEBI" id="CHEBI:2700"/>
        <dbReference type="ChEBI" id="CHEBI:15377"/>
        <dbReference type="ChEBI" id="CHEBI:15378"/>
        <dbReference type="ChEBI" id="CHEBI:15379"/>
        <dbReference type="ChEBI" id="CHEBI:57618"/>
        <dbReference type="ChEBI" id="CHEBI:58210"/>
        <dbReference type="ChEBI" id="CHEBI:136989"/>
    </reaction>
    <physiologicalReaction direction="left-to-right" evidence="2">
        <dbReference type="Rhea" id="RHEA:53141"/>
    </physiologicalReaction>
</comment>
<comment type="catalytic activity">
    <reaction evidence="2">
        <text>N-(5Z,8Z,11Z,14Z-eicosatetraenoyl)-ethanolamine + reduced [NADPH--hemoprotein reductase] + O2 = N-(11,12-epoxy-5Z,8Z,14Z-eicosatrienoyl)-ethanolamine + oxidized [NADPH--hemoprotein reductase] + H2O + H(+)</text>
        <dbReference type="Rhea" id="RHEA:53144"/>
        <dbReference type="Rhea" id="RHEA-COMP:11964"/>
        <dbReference type="Rhea" id="RHEA-COMP:11965"/>
        <dbReference type="ChEBI" id="CHEBI:2700"/>
        <dbReference type="ChEBI" id="CHEBI:15377"/>
        <dbReference type="ChEBI" id="CHEBI:15378"/>
        <dbReference type="ChEBI" id="CHEBI:15379"/>
        <dbReference type="ChEBI" id="CHEBI:57618"/>
        <dbReference type="ChEBI" id="CHEBI:58210"/>
        <dbReference type="ChEBI" id="CHEBI:136990"/>
    </reaction>
    <physiologicalReaction direction="left-to-right" evidence="2">
        <dbReference type="Rhea" id="RHEA:53145"/>
    </physiologicalReaction>
</comment>
<comment type="catalytic activity">
    <reaction evidence="2">
        <text>N-(5Z,8Z,11Z,14Z-eicosatetraenoyl)-ethanolamine + reduced [NADPH--hemoprotein reductase] + O2 = N-(14,15-epoxy-5Z,8Z,11Z-eicosatrienoyl)-ethanolamine + oxidized [NADPH--hemoprotein reductase] + H2O + H(+)</text>
        <dbReference type="Rhea" id="RHEA:53148"/>
        <dbReference type="Rhea" id="RHEA-COMP:11964"/>
        <dbReference type="Rhea" id="RHEA-COMP:11965"/>
        <dbReference type="ChEBI" id="CHEBI:2700"/>
        <dbReference type="ChEBI" id="CHEBI:15377"/>
        <dbReference type="ChEBI" id="CHEBI:15378"/>
        <dbReference type="ChEBI" id="CHEBI:15379"/>
        <dbReference type="ChEBI" id="CHEBI:57618"/>
        <dbReference type="ChEBI" id="CHEBI:58210"/>
        <dbReference type="ChEBI" id="CHEBI:136991"/>
    </reaction>
    <physiologicalReaction direction="left-to-right" evidence="2">
        <dbReference type="Rhea" id="RHEA:53149"/>
    </physiologicalReaction>
</comment>
<comment type="catalytic activity">
    <reaction evidence="2">
        <text>N-(5Z,8Z,11Z,14Z-eicosatetraenoyl)-ethanolamine + reduced [NADPH--hemoprotein reductase] + O2 = N-(20-hydroxy-5Z,8Z,11Z,14Z-eicosatetraenoyl)-ethanolamine + oxidized [NADPH--hemoprotein reductase] + H2O + H(+)</text>
        <dbReference type="Rhea" id="RHEA:53152"/>
        <dbReference type="Rhea" id="RHEA-COMP:11964"/>
        <dbReference type="Rhea" id="RHEA-COMP:11965"/>
        <dbReference type="ChEBI" id="CHEBI:2700"/>
        <dbReference type="ChEBI" id="CHEBI:15377"/>
        <dbReference type="ChEBI" id="CHEBI:15378"/>
        <dbReference type="ChEBI" id="CHEBI:15379"/>
        <dbReference type="ChEBI" id="CHEBI:57618"/>
        <dbReference type="ChEBI" id="CHEBI:58210"/>
        <dbReference type="ChEBI" id="CHEBI:136992"/>
    </reaction>
    <physiologicalReaction direction="left-to-right" evidence="2">
        <dbReference type="Rhea" id="RHEA:53153"/>
    </physiologicalReaction>
</comment>
<comment type="catalytic activity">
    <reaction evidence="2">
        <text>(5Z,8Z,11Z,14Z,17Z)-eicosapentaenoate + reduced [NADPH--hemoprotein reductase] + O2 = (17S,18R)-epoxy-(5Z,8Z,11Z,14Z)-eicosatetraenoate + oxidized [NADPH--hemoprotein reductase] + H2O + H(+)</text>
        <dbReference type="Rhea" id="RHEA:39783"/>
        <dbReference type="Rhea" id="RHEA-COMP:11964"/>
        <dbReference type="Rhea" id="RHEA-COMP:11965"/>
        <dbReference type="ChEBI" id="CHEBI:15377"/>
        <dbReference type="ChEBI" id="CHEBI:15378"/>
        <dbReference type="ChEBI" id="CHEBI:15379"/>
        <dbReference type="ChEBI" id="CHEBI:57618"/>
        <dbReference type="ChEBI" id="CHEBI:58210"/>
        <dbReference type="ChEBI" id="CHEBI:58562"/>
        <dbReference type="ChEBI" id="CHEBI:76635"/>
    </reaction>
    <physiologicalReaction direction="left-to-right" evidence="2">
        <dbReference type="Rhea" id="RHEA:39784"/>
    </physiologicalReaction>
</comment>
<comment type="catalytic activity">
    <reaction evidence="2">
        <text>(4Z,7Z,10Z,13Z,16Z,19Z)-docosahexaenoate + reduced [NADPH--hemoprotein reductase] + O2 = (19R,20S)-epoxy-(4Z,7Z,10Z,13Z,16Z)-docosapentaenoate + oxidized [NADPH--hemoprotein reductase] + H2O + H(+)</text>
        <dbReference type="Rhea" id="RHEA:52120"/>
        <dbReference type="Rhea" id="RHEA-COMP:11964"/>
        <dbReference type="Rhea" id="RHEA-COMP:11965"/>
        <dbReference type="ChEBI" id="CHEBI:15377"/>
        <dbReference type="ChEBI" id="CHEBI:15378"/>
        <dbReference type="ChEBI" id="CHEBI:15379"/>
        <dbReference type="ChEBI" id="CHEBI:57618"/>
        <dbReference type="ChEBI" id="CHEBI:58210"/>
        <dbReference type="ChEBI" id="CHEBI:77016"/>
        <dbReference type="ChEBI" id="CHEBI:136410"/>
    </reaction>
    <physiologicalReaction direction="left-to-right" evidence="2">
        <dbReference type="Rhea" id="RHEA:52121"/>
    </physiologicalReaction>
</comment>
<comment type="catalytic activity">
    <reaction evidence="2">
        <text>(4Z,7Z,10Z,13Z,16Z,19Z)-docosahexaenoate + reduced [NADPH--hemoprotein reductase] + O2 = (19S,20R)-epoxy-(4Z,7Z,10Z,13Z,16Z)-docosapentaenoate + oxidized [NADPH--hemoprotein reductase] + H2O + H(+)</text>
        <dbReference type="Rhea" id="RHEA:52124"/>
        <dbReference type="Rhea" id="RHEA-COMP:11964"/>
        <dbReference type="Rhea" id="RHEA-COMP:11965"/>
        <dbReference type="ChEBI" id="CHEBI:15377"/>
        <dbReference type="ChEBI" id="CHEBI:15378"/>
        <dbReference type="ChEBI" id="CHEBI:15379"/>
        <dbReference type="ChEBI" id="CHEBI:57618"/>
        <dbReference type="ChEBI" id="CHEBI:58210"/>
        <dbReference type="ChEBI" id="CHEBI:77016"/>
        <dbReference type="ChEBI" id="CHEBI:136411"/>
    </reaction>
    <physiologicalReaction direction="left-to-right" evidence="2">
        <dbReference type="Rhea" id="RHEA:52125"/>
    </physiologicalReaction>
</comment>
<comment type="catalytic activity">
    <reaction evidence="2">
        <text>cholesterol + reduced [NADPH--hemoprotein reductase] + O2 = 25-hydroxycholesterol + oxidized [NADPH--hemoprotein reductase] + H2O + H(+)</text>
        <dbReference type="Rhea" id="RHEA:50256"/>
        <dbReference type="Rhea" id="RHEA-COMP:11964"/>
        <dbReference type="Rhea" id="RHEA-COMP:11965"/>
        <dbReference type="ChEBI" id="CHEBI:15377"/>
        <dbReference type="ChEBI" id="CHEBI:15378"/>
        <dbReference type="ChEBI" id="CHEBI:15379"/>
        <dbReference type="ChEBI" id="CHEBI:16113"/>
        <dbReference type="ChEBI" id="CHEBI:42977"/>
        <dbReference type="ChEBI" id="CHEBI:57618"/>
        <dbReference type="ChEBI" id="CHEBI:58210"/>
    </reaction>
    <physiologicalReaction direction="left-to-right" evidence="2">
        <dbReference type="Rhea" id="RHEA:50257"/>
    </physiologicalReaction>
</comment>
<comment type="catalytic activity">
    <reaction evidence="2">
        <text>all-trans-retinol + reduced [NADPH--hemoprotein reductase] + O2 = all-trans-retinal + oxidized [NADPH--hemoprotein reductase] + 2 H2O + H(+)</text>
        <dbReference type="Rhea" id="RHEA:42092"/>
        <dbReference type="Rhea" id="RHEA-COMP:11964"/>
        <dbReference type="Rhea" id="RHEA-COMP:11965"/>
        <dbReference type="ChEBI" id="CHEBI:15377"/>
        <dbReference type="ChEBI" id="CHEBI:15378"/>
        <dbReference type="ChEBI" id="CHEBI:15379"/>
        <dbReference type="ChEBI" id="CHEBI:17336"/>
        <dbReference type="ChEBI" id="CHEBI:17898"/>
        <dbReference type="ChEBI" id="CHEBI:57618"/>
        <dbReference type="ChEBI" id="CHEBI:58210"/>
    </reaction>
    <physiologicalReaction direction="left-to-right" evidence="2">
        <dbReference type="Rhea" id="RHEA:42093"/>
    </physiologicalReaction>
</comment>
<comment type="cofactor">
    <cofactor evidence="1">
        <name>heme</name>
        <dbReference type="ChEBI" id="CHEBI:30413"/>
    </cofactor>
</comment>
<comment type="pathway">
    <text evidence="2">Cofactor metabolism; retinol metabolism.</text>
</comment>
<comment type="pathway">
    <text evidence="2">Lipid metabolism; fatty acid metabolism.</text>
</comment>
<comment type="pathway">
    <text evidence="2">Steroid metabolism; cholesterol metabolism.</text>
</comment>
<comment type="subcellular location">
    <subcellularLocation>
        <location evidence="2">Endoplasmic reticulum membrane</location>
        <topology evidence="2">Peripheral membrane protein</topology>
    </subcellularLocation>
    <subcellularLocation>
        <location evidence="2">Microsome membrane</location>
        <topology evidence="2">Peripheral membrane protein</topology>
    </subcellularLocation>
</comment>
<comment type="similarity">
    <text evidence="3">Belongs to the cytochrome P450 family.</text>
</comment>
<feature type="chain" id="PRO_0000051732" description="Cytochrome P450 2D6">
    <location>
        <begin position="1"/>
        <end position="497"/>
    </location>
</feature>
<feature type="binding site" evidence="1">
    <location>
        <position position="301"/>
    </location>
    <ligand>
        <name>substrate</name>
    </ligand>
</feature>
<feature type="binding site" description="axial binding residue" evidence="1">
    <location>
        <position position="443"/>
    </location>
    <ligand>
        <name>heme</name>
        <dbReference type="ChEBI" id="CHEBI:30413"/>
    </ligand>
    <ligandPart>
        <name>Fe</name>
        <dbReference type="ChEBI" id="CHEBI:18248"/>
    </ligandPart>
</feature>
<accession>Q2XNC9</accession>
<protein>
    <recommendedName>
        <fullName>Cytochrome P450 2D6</fullName>
        <ecNumber evidence="2">1.14.14.-</ecNumber>
    </recommendedName>
    <alternativeName>
        <fullName>CYPIID6</fullName>
    </alternativeName>
    <alternativeName>
        <fullName evidence="2">Cholesterol 25-hydroxylase</fullName>
    </alternativeName>
    <alternativeName>
        <fullName>Cytochrome P450-DB1</fullName>
    </alternativeName>
    <alternativeName>
        <fullName>Debrisoquine 4-hydroxylase</fullName>
    </alternativeName>
</protein>
<sequence>MGLEALVPLAVIVTIFLLLVDLMHRRQRWAARYPPGPLPLPGLGNLLHVDFQNTPYCFDQLRRRFGDVFSLQLAWTPVVVLNGLAAVREALVTHGEDTADRPPVPITQILGFGPRSQGVFLARYGPAWREQRRFSVSTLRNLGLGKKSLEQWVTEEAACLCAAFANHSGRPFRPNGLLDKAVSNVIASLTCGRRFEYDDPRFLRLLDLAQEGLKEESGFLREVLNAVPVLLHIPALAGKVLRFQKAFLTQLDELLTEHRMTWDPAQPPRDLTEAFLAEMEKAKGNPESSFNDENLRIVVADLFSAGMVTTSTTLAWGLLLMILHPDVQRRVQQEIDDVIGQVRRPEMGDQARMPYTTAVIHEVQRFGDIVPLGVTHMTSRDIEVQGFRIPKGTTLFTNLSSVLKDEAVWEKPFRFHPEHFLDAQGHFVKPEAFLPFSAGRRACLGEPLARMELFLFFTSLLQHFSFSVPTGQPRPSHHGVFAFLVTPSPYELCAVPR</sequence>
<name>CP2D6_PANPA</name>